<protein>
    <recommendedName>
        <fullName evidence="1">Glucosamine-6-phosphate deaminase</fullName>
        <ecNumber evidence="1">3.5.99.6</ecNumber>
    </recommendedName>
    <alternativeName>
        <fullName evidence="1">GlcN6P deaminase</fullName>
        <shortName evidence="1">GNPDA</shortName>
    </alternativeName>
    <alternativeName>
        <fullName evidence="1">Glucosamine-6-phosphate isomerase</fullName>
    </alternativeName>
</protein>
<keyword id="KW-0021">Allosteric enzyme</keyword>
<keyword id="KW-0119">Carbohydrate metabolism</keyword>
<keyword id="KW-1015">Disulfide bond</keyword>
<keyword id="KW-0378">Hydrolase</keyword>
<feature type="chain" id="PRO_1000139775" description="Glucosamine-6-phosphate deaminase">
    <location>
        <begin position="1"/>
        <end position="266"/>
    </location>
</feature>
<feature type="active site" description="Proton acceptor; for enolization step" evidence="1">
    <location>
        <position position="72"/>
    </location>
</feature>
<feature type="active site" description="For ring-opening step" evidence="1">
    <location>
        <position position="141"/>
    </location>
</feature>
<feature type="active site" description="Proton acceptor; for ring-opening step" evidence="1">
    <location>
        <position position="143"/>
    </location>
</feature>
<feature type="active site" description="For ring-opening step" evidence="1">
    <location>
        <position position="148"/>
    </location>
</feature>
<feature type="site" description="Part of the allosteric site" evidence="1">
    <location>
        <position position="151"/>
    </location>
</feature>
<feature type="site" description="Part of the allosteric site" evidence="1">
    <location>
        <position position="158"/>
    </location>
</feature>
<feature type="site" description="Part of the allosteric site" evidence="1">
    <location>
        <position position="160"/>
    </location>
</feature>
<feature type="site" description="Part of the allosteric site" evidence="1">
    <location>
        <position position="161"/>
    </location>
</feature>
<feature type="site" description="Part of the allosteric site" evidence="1">
    <location>
        <position position="254"/>
    </location>
</feature>
<feature type="disulfide bond" description="Interchain" evidence="1">
    <location>
        <position position="219"/>
    </location>
</feature>
<accession>B1LLC0</accession>
<dbReference type="EC" id="3.5.99.6" evidence="1"/>
<dbReference type="EMBL" id="CP000970">
    <property type="protein sequence ID" value="ACB18082.1"/>
    <property type="molecule type" value="Genomic_DNA"/>
</dbReference>
<dbReference type="RefSeq" id="WP_001237072.1">
    <property type="nucleotide sequence ID" value="NC_010498.1"/>
</dbReference>
<dbReference type="SMR" id="B1LLC0"/>
<dbReference type="GeneID" id="93776807"/>
<dbReference type="KEGG" id="ecm:EcSMS35_0698"/>
<dbReference type="HOGENOM" id="CLU_049611_0_1_6"/>
<dbReference type="UniPathway" id="UPA00629">
    <property type="reaction ID" value="UER00684"/>
</dbReference>
<dbReference type="Proteomes" id="UP000007011">
    <property type="component" value="Chromosome"/>
</dbReference>
<dbReference type="GO" id="GO:0005829">
    <property type="term" value="C:cytosol"/>
    <property type="evidence" value="ECO:0007669"/>
    <property type="project" value="TreeGrafter"/>
</dbReference>
<dbReference type="GO" id="GO:0004342">
    <property type="term" value="F:glucosamine-6-phosphate deaminase activity"/>
    <property type="evidence" value="ECO:0007669"/>
    <property type="project" value="UniProtKB-UniRule"/>
</dbReference>
<dbReference type="GO" id="GO:0042802">
    <property type="term" value="F:identical protein binding"/>
    <property type="evidence" value="ECO:0007669"/>
    <property type="project" value="TreeGrafter"/>
</dbReference>
<dbReference type="GO" id="GO:0005975">
    <property type="term" value="P:carbohydrate metabolic process"/>
    <property type="evidence" value="ECO:0007669"/>
    <property type="project" value="InterPro"/>
</dbReference>
<dbReference type="GO" id="GO:0006043">
    <property type="term" value="P:glucosamine catabolic process"/>
    <property type="evidence" value="ECO:0007669"/>
    <property type="project" value="TreeGrafter"/>
</dbReference>
<dbReference type="GO" id="GO:0006046">
    <property type="term" value="P:N-acetylglucosamine catabolic process"/>
    <property type="evidence" value="ECO:0007669"/>
    <property type="project" value="TreeGrafter"/>
</dbReference>
<dbReference type="GO" id="GO:0019262">
    <property type="term" value="P:N-acetylneuraminate catabolic process"/>
    <property type="evidence" value="ECO:0007669"/>
    <property type="project" value="UniProtKB-UniRule"/>
</dbReference>
<dbReference type="CDD" id="cd01399">
    <property type="entry name" value="GlcN6P_deaminase"/>
    <property type="match status" value="1"/>
</dbReference>
<dbReference type="FunFam" id="3.40.50.1360:FF:000002">
    <property type="entry name" value="Glucosamine-6-phosphate deaminase"/>
    <property type="match status" value="1"/>
</dbReference>
<dbReference type="Gene3D" id="3.40.50.1360">
    <property type="match status" value="1"/>
</dbReference>
<dbReference type="HAMAP" id="MF_01241">
    <property type="entry name" value="GlcN6P_deamin"/>
    <property type="match status" value="1"/>
</dbReference>
<dbReference type="InterPro" id="IPR006148">
    <property type="entry name" value="Glc/Gal-6P_isomerase"/>
</dbReference>
<dbReference type="InterPro" id="IPR004547">
    <property type="entry name" value="Glucosamine6P_isomerase"/>
</dbReference>
<dbReference type="InterPro" id="IPR018321">
    <property type="entry name" value="Glucosamine6P_isomerase_CS"/>
</dbReference>
<dbReference type="InterPro" id="IPR037171">
    <property type="entry name" value="NagB/RpiA_transferase-like"/>
</dbReference>
<dbReference type="NCBIfam" id="TIGR00502">
    <property type="entry name" value="nagB"/>
    <property type="match status" value="1"/>
</dbReference>
<dbReference type="NCBIfam" id="NF001685">
    <property type="entry name" value="PRK00443.1-5"/>
    <property type="match status" value="1"/>
</dbReference>
<dbReference type="PANTHER" id="PTHR11280">
    <property type="entry name" value="GLUCOSAMINE-6-PHOSPHATE ISOMERASE"/>
    <property type="match status" value="1"/>
</dbReference>
<dbReference type="PANTHER" id="PTHR11280:SF5">
    <property type="entry name" value="GLUCOSAMINE-6-PHOSPHATE ISOMERASE"/>
    <property type="match status" value="1"/>
</dbReference>
<dbReference type="Pfam" id="PF01182">
    <property type="entry name" value="Glucosamine_iso"/>
    <property type="match status" value="1"/>
</dbReference>
<dbReference type="SUPFAM" id="SSF100950">
    <property type="entry name" value="NagB/RpiA/CoA transferase-like"/>
    <property type="match status" value="1"/>
</dbReference>
<dbReference type="PROSITE" id="PS01161">
    <property type="entry name" value="GLC_GALNAC_ISOMERASE"/>
    <property type="match status" value="1"/>
</dbReference>
<proteinExistence type="inferred from homology"/>
<evidence type="ECO:0000255" key="1">
    <source>
        <dbReference type="HAMAP-Rule" id="MF_01241"/>
    </source>
</evidence>
<comment type="function">
    <text evidence="1">Catalyzes the reversible isomerization-deamination of glucosamine 6-phosphate (GlcN6P) to form fructose 6-phosphate (Fru6P) and ammonium ion.</text>
</comment>
<comment type="catalytic activity">
    <reaction evidence="1">
        <text>alpha-D-glucosamine 6-phosphate + H2O = beta-D-fructose 6-phosphate + NH4(+)</text>
        <dbReference type="Rhea" id="RHEA:12172"/>
        <dbReference type="ChEBI" id="CHEBI:15377"/>
        <dbReference type="ChEBI" id="CHEBI:28938"/>
        <dbReference type="ChEBI" id="CHEBI:57634"/>
        <dbReference type="ChEBI" id="CHEBI:75989"/>
        <dbReference type="EC" id="3.5.99.6"/>
    </reaction>
</comment>
<comment type="activity regulation">
    <text evidence="1">Allosterically activated by N-acetylglucosamine 6-phosphate (GlcNAc6P).</text>
</comment>
<comment type="pathway">
    <text evidence="1">Amino-sugar metabolism; N-acetylneuraminate degradation; D-fructose 6-phosphate from N-acetylneuraminate: step 5/5.</text>
</comment>
<comment type="subunit">
    <text evidence="1">Homohexamer; trimer of disulfide-linked dimers.</text>
</comment>
<comment type="similarity">
    <text evidence="1">Belongs to the glucosamine/galactosamine-6-phosphate isomerase family. NagB subfamily.</text>
</comment>
<reference key="1">
    <citation type="journal article" date="2008" name="J. Bacteriol.">
        <title>Insights into the environmental resistance gene pool from the genome sequence of the multidrug-resistant environmental isolate Escherichia coli SMS-3-5.</title>
        <authorList>
            <person name="Fricke W.F."/>
            <person name="Wright M.S."/>
            <person name="Lindell A.H."/>
            <person name="Harkins D.M."/>
            <person name="Baker-Austin C."/>
            <person name="Ravel J."/>
            <person name="Stepanauskas R."/>
        </authorList>
    </citation>
    <scope>NUCLEOTIDE SEQUENCE [LARGE SCALE GENOMIC DNA]</scope>
    <source>
        <strain>SMS-3-5 / SECEC</strain>
    </source>
</reference>
<name>NAGB_ECOSM</name>
<organism>
    <name type="scientific">Escherichia coli (strain SMS-3-5 / SECEC)</name>
    <dbReference type="NCBI Taxonomy" id="439855"/>
    <lineage>
        <taxon>Bacteria</taxon>
        <taxon>Pseudomonadati</taxon>
        <taxon>Pseudomonadota</taxon>
        <taxon>Gammaproteobacteria</taxon>
        <taxon>Enterobacterales</taxon>
        <taxon>Enterobacteriaceae</taxon>
        <taxon>Escherichia</taxon>
    </lineage>
</organism>
<gene>
    <name evidence="1" type="primary">nagB</name>
    <name type="ordered locus">EcSMS35_0698</name>
</gene>
<sequence>MRLIPLTTAEQVGKWAARHIVNRINAFKPTADRPFVLGLPTGGTPMTTYKALVEMHKAGQVSFKHVVTFNMDEYVGLPKEHPESYYSFMHRNFFDHVDIPAENINLLNGNAPDIDAECRQYEEKIRSYGKIHLFMGGVGNDGHIAFNEPASSLASRTRIKTLTHDTRVANSRFFDNDVNQVPKYALTVGVGTLLDAEEVMILVLGSQKALALQAAVEGCVNHMWTISCLQLHPKAIMVCDEPSTMELKVKTLRYFNELEAENIKGL</sequence>